<comment type="function">
    <text evidence="1">Part of the Sec protein translocase complex. Interacts with the SecYEG preprotein conducting channel. Has a central role in coupling the hydrolysis of ATP to the transfer of proteins into and across the cell membrane, serving both as a receptor for the preprotein-SecB complex and as an ATP-driven molecular motor driving the stepwise translocation of polypeptide chains across the membrane.</text>
</comment>
<comment type="catalytic activity">
    <reaction evidence="1">
        <text>ATP + H2O + cellular proteinSide 1 = ADP + phosphate + cellular proteinSide 2.</text>
        <dbReference type="EC" id="7.4.2.8"/>
    </reaction>
</comment>
<comment type="cofactor">
    <cofactor evidence="1">
        <name>Zn(2+)</name>
        <dbReference type="ChEBI" id="CHEBI:29105"/>
    </cofactor>
    <text evidence="1">May bind 1 zinc ion per subunit.</text>
</comment>
<comment type="subunit">
    <text evidence="1">Monomer and homodimer. Part of the essential Sec protein translocation apparatus which comprises SecA, SecYEG and auxiliary proteins SecDF-YajC and YidC.</text>
</comment>
<comment type="subcellular location">
    <subcellularLocation>
        <location evidence="1">Cell inner membrane</location>
        <topology evidence="1">Peripheral membrane protein</topology>
        <orientation evidence="1">Cytoplasmic side</orientation>
    </subcellularLocation>
    <subcellularLocation>
        <location evidence="1">Cytoplasm</location>
    </subcellularLocation>
    <text evidence="1">Distribution is 50-50.</text>
</comment>
<comment type="similarity">
    <text evidence="1">Belongs to the SecA family.</text>
</comment>
<sequence>MVSFGGLARKIFGSSNDRRVKTLRQRAEQITALEKNYENLTDEQLQAKTAEFRAALAEGKSLDSLLPDAFATAREAAKRVLGMRPFDVQLIGGMVLHERGIAEMRTGEGKTLMATLPVYLNALEGKGVHVVTVNDYLATRDAETMGRLYNFLGLTVGVIKHGLDDDERRAAYACDITYGTNNELGFDYLRDNMKYERAQMVQRPHNYAIVDEVDSILIDEARTPLIISGPLEDRSDFYNLIDTFIPPLAEEDYEVDEKQKTAIFTEVGTEKVEKLLEAAGHLKGESLYDIENVAVVHHLNNALRAHKLFQRDKDYIVRNDEIVIIDEFTGRMMPGRRYSEGLHQALEAKEHVTIQPENQTLASITFQNYFRMYNKLSGMTGTAATEAEEFGNIYGLEVLEIPTNLPVQRIDEDDEVYRTVEEKYRAIVRDIRASHEKGQPILVGTTSIEKSEQLAERLRREGIKGFQVLNARYHEQEAYIIAQAGVPGAVTIATNMAGRGTDIQLGGNLEMRVRQELSDVPEGPEREEKIAAIKADIAQLKEKALAAGGLYVLATERHESRRIDNQLRGRSGRQGDPGRSKFFLSLQDDLMRIFGSDRMDGMLQKLGLKEDEAIVHPWINKALEKAQKKVEARNFEIRKNLLKYDDVMNDQRKVIFEQRLEMMDEEDLTETVAEMRHEVIEDMVILRIPKDAYAEKWDIAGLKQDIASKLNLDLPVEEWAKEEGIAEEEFENRIKEAADKAAAEKAERFGPQIMTYVEKSVIMQSLDNLWREHLVNLDHLRSVVGFRGYAQRDPLNEYKTEAFELFQTMLANLREVVISQLMRVEIVREAPPEPQLPPMAGLHIDGTTGENDFDEAIWAEHQHDDRIVPPAQRDPADPRTWGKVSRNEPCPCGSGKKYKHCHGAFE</sequence>
<organism>
    <name type="scientific">Brucella abortus (strain S19)</name>
    <dbReference type="NCBI Taxonomy" id="430066"/>
    <lineage>
        <taxon>Bacteria</taxon>
        <taxon>Pseudomonadati</taxon>
        <taxon>Pseudomonadota</taxon>
        <taxon>Alphaproteobacteria</taxon>
        <taxon>Hyphomicrobiales</taxon>
        <taxon>Brucellaceae</taxon>
        <taxon>Brucella/Ochrobactrum group</taxon>
        <taxon>Brucella</taxon>
    </lineage>
</organism>
<gene>
    <name evidence="1" type="primary">secA</name>
    <name type="ordered locus">BAbS19_I18240</name>
</gene>
<protein>
    <recommendedName>
        <fullName evidence="1">Protein translocase subunit SecA</fullName>
        <ecNumber evidence="1">7.4.2.8</ecNumber>
    </recommendedName>
</protein>
<evidence type="ECO:0000255" key="1">
    <source>
        <dbReference type="HAMAP-Rule" id="MF_01382"/>
    </source>
</evidence>
<evidence type="ECO:0000256" key="2">
    <source>
        <dbReference type="SAM" id="MobiDB-lite"/>
    </source>
</evidence>
<dbReference type="EC" id="7.4.2.8" evidence="1"/>
<dbReference type="EMBL" id="CP000887">
    <property type="protein sequence ID" value="ACD73306.1"/>
    <property type="molecule type" value="Genomic_DNA"/>
</dbReference>
<dbReference type="RefSeq" id="WP_002965012.1">
    <property type="nucleotide sequence ID" value="NC_010742.1"/>
</dbReference>
<dbReference type="SMR" id="B2S897"/>
<dbReference type="GeneID" id="93017729"/>
<dbReference type="KEGG" id="bmc:BAbS19_I18240"/>
<dbReference type="HOGENOM" id="CLU_005314_3_0_5"/>
<dbReference type="Proteomes" id="UP000002565">
    <property type="component" value="Chromosome 1"/>
</dbReference>
<dbReference type="GO" id="GO:0031522">
    <property type="term" value="C:cell envelope Sec protein transport complex"/>
    <property type="evidence" value="ECO:0007669"/>
    <property type="project" value="TreeGrafter"/>
</dbReference>
<dbReference type="GO" id="GO:0005829">
    <property type="term" value="C:cytosol"/>
    <property type="evidence" value="ECO:0007669"/>
    <property type="project" value="TreeGrafter"/>
</dbReference>
<dbReference type="GO" id="GO:0005886">
    <property type="term" value="C:plasma membrane"/>
    <property type="evidence" value="ECO:0007669"/>
    <property type="project" value="UniProtKB-SubCell"/>
</dbReference>
<dbReference type="GO" id="GO:0005524">
    <property type="term" value="F:ATP binding"/>
    <property type="evidence" value="ECO:0007669"/>
    <property type="project" value="UniProtKB-UniRule"/>
</dbReference>
<dbReference type="GO" id="GO:0046872">
    <property type="term" value="F:metal ion binding"/>
    <property type="evidence" value="ECO:0007669"/>
    <property type="project" value="UniProtKB-KW"/>
</dbReference>
<dbReference type="GO" id="GO:0008564">
    <property type="term" value="F:protein-exporting ATPase activity"/>
    <property type="evidence" value="ECO:0007669"/>
    <property type="project" value="UniProtKB-EC"/>
</dbReference>
<dbReference type="GO" id="GO:0065002">
    <property type="term" value="P:intracellular protein transmembrane transport"/>
    <property type="evidence" value="ECO:0007669"/>
    <property type="project" value="UniProtKB-UniRule"/>
</dbReference>
<dbReference type="GO" id="GO:0017038">
    <property type="term" value="P:protein import"/>
    <property type="evidence" value="ECO:0007669"/>
    <property type="project" value="InterPro"/>
</dbReference>
<dbReference type="GO" id="GO:0006605">
    <property type="term" value="P:protein targeting"/>
    <property type="evidence" value="ECO:0007669"/>
    <property type="project" value="UniProtKB-UniRule"/>
</dbReference>
<dbReference type="GO" id="GO:0043952">
    <property type="term" value="P:protein transport by the Sec complex"/>
    <property type="evidence" value="ECO:0007669"/>
    <property type="project" value="TreeGrafter"/>
</dbReference>
<dbReference type="CDD" id="cd17928">
    <property type="entry name" value="DEXDc_SecA"/>
    <property type="match status" value="1"/>
</dbReference>
<dbReference type="CDD" id="cd18803">
    <property type="entry name" value="SF2_C_secA"/>
    <property type="match status" value="1"/>
</dbReference>
<dbReference type="FunFam" id="3.90.1440.10:FF:000001">
    <property type="entry name" value="Preprotein translocase subunit SecA"/>
    <property type="match status" value="1"/>
</dbReference>
<dbReference type="FunFam" id="1.10.3060.10:FF:000003">
    <property type="entry name" value="Protein translocase subunit SecA"/>
    <property type="match status" value="1"/>
</dbReference>
<dbReference type="FunFam" id="3.40.50.300:FF:000334">
    <property type="entry name" value="Protein translocase subunit SecA"/>
    <property type="match status" value="1"/>
</dbReference>
<dbReference type="FunFam" id="3.40.50.300:FF:001790">
    <property type="entry name" value="Protein translocase subunit SecA"/>
    <property type="match status" value="1"/>
</dbReference>
<dbReference type="Gene3D" id="3.10.450.50">
    <property type="match status" value="1"/>
</dbReference>
<dbReference type="Gene3D" id="1.10.3060.10">
    <property type="entry name" value="Helical scaffold and wing domains of SecA"/>
    <property type="match status" value="1"/>
</dbReference>
<dbReference type="Gene3D" id="3.40.50.300">
    <property type="entry name" value="P-loop containing nucleotide triphosphate hydrolases"/>
    <property type="match status" value="2"/>
</dbReference>
<dbReference type="Gene3D" id="3.90.1440.10">
    <property type="entry name" value="SecA, preprotein cross-linking domain"/>
    <property type="match status" value="1"/>
</dbReference>
<dbReference type="HAMAP" id="MF_01382">
    <property type="entry name" value="SecA"/>
    <property type="match status" value="1"/>
</dbReference>
<dbReference type="InterPro" id="IPR014001">
    <property type="entry name" value="Helicase_ATP-bd"/>
</dbReference>
<dbReference type="InterPro" id="IPR001650">
    <property type="entry name" value="Helicase_C-like"/>
</dbReference>
<dbReference type="InterPro" id="IPR027417">
    <property type="entry name" value="P-loop_NTPase"/>
</dbReference>
<dbReference type="InterPro" id="IPR004027">
    <property type="entry name" value="SEC_C_motif"/>
</dbReference>
<dbReference type="InterPro" id="IPR000185">
    <property type="entry name" value="SecA"/>
</dbReference>
<dbReference type="InterPro" id="IPR020937">
    <property type="entry name" value="SecA_CS"/>
</dbReference>
<dbReference type="InterPro" id="IPR011115">
    <property type="entry name" value="SecA_DEAD"/>
</dbReference>
<dbReference type="InterPro" id="IPR014018">
    <property type="entry name" value="SecA_motor_DEAD"/>
</dbReference>
<dbReference type="InterPro" id="IPR011130">
    <property type="entry name" value="SecA_preprotein_X-link_dom"/>
</dbReference>
<dbReference type="InterPro" id="IPR044722">
    <property type="entry name" value="SecA_SF2_C"/>
</dbReference>
<dbReference type="InterPro" id="IPR011116">
    <property type="entry name" value="SecA_Wing/Scaffold"/>
</dbReference>
<dbReference type="InterPro" id="IPR036266">
    <property type="entry name" value="SecA_Wing/Scaffold_sf"/>
</dbReference>
<dbReference type="InterPro" id="IPR036670">
    <property type="entry name" value="SecA_X-link_sf"/>
</dbReference>
<dbReference type="NCBIfam" id="NF009538">
    <property type="entry name" value="PRK12904.1"/>
    <property type="match status" value="1"/>
</dbReference>
<dbReference type="NCBIfam" id="TIGR00963">
    <property type="entry name" value="secA"/>
    <property type="match status" value="1"/>
</dbReference>
<dbReference type="PANTHER" id="PTHR30612:SF0">
    <property type="entry name" value="CHLOROPLAST PROTEIN-TRANSPORTING ATPASE"/>
    <property type="match status" value="1"/>
</dbReference>
<dbReference type="PANTHER" id="PTHR30612">
    <property type="entry name" value="SECA INNER MEMBRANE COMPONENT OF SEC PROTEIN SECRETION SYSTEM"/>
    <property type="match status" value="1"/>
</dbReference>
<dbReference type="Pfam" id="PF21090">
    <property type="entry name" value="P-loop_SecA"/>
    <property type="match status" value="1"/>
</dbReference>
<dbReference type="Pfam" id="PF02810">
    <property type="entry name" value="SEC-C"/>
    <property type="match status" value="1"/>
</dbReference>
<dbReference type="Pfam" id="PF07517">
    <property type="entry name" value="SecA_DEAD"/>
    <property type="match status" value="1"/>
</dbReference>
<dbReference type="Pfam" id="PF01043">
    <property type="entry name" value="SecA_PP_bind"/>
    <property type="match status" value="1"/>
</dbReference>
<dbReference type="Pfam" id="PF07516">
    <property type="entry name" value="SecA_SW"/>
    <property type="match status" value="1"/>
</dbReference>
<dbReference type="PRINTS" id="PR00906">
    <property type="entry name" value="SECA"/>
</dbReference>
<dbReference type="SMART" id="SM00957">
    <property type="entry name" value="SecA_DEAD"/>
    <property type="match status" value="1"/>
</dbReference>
<dbReference type="SMART" id="SM00958">
    <property type="entry name" value="SecA_PP_bind"/>
    <property type="match status" value="1"/>
</dbReference>
<dbReference type="SUPFAM" id="SSF81886">
    <property type="entry name" value="Helical scaffold and wing domains of SecA"/>
    <property type="match status" value="1"/>
</dbReference>
<dbReference type="SUPFAM" id="SSF52540">
    <property type="entry name" value="P-loop containing nucleoside triphosphate hydrolases"/>
    <property type="match status" value="2"/>
</dbReference>
<dbReference type="SUPFAM" id="SSF81767">
    <property type="entry name" value="Pre-protein crosslinking domain of SecA"/>
    <property type="match status" value="1"/>
</dbReference>
<dbReference type="PROSITE" id="PS01312">
    <property type="entry name" value="SECA"/>
    <property type="match status" value="1"/>
</dbReference>
<dbReference type="PROSITE" id="PS51196">
    <property type="entry name" value="SECA_MOTOR_DEAD"/>
    <property type="match status" value="1"/>
</dbReference>
<accession>B2S897</accession>
<name>SECA_BRUA1</name>
<proteinExistence type="inferred from homology"/>
<feature type="chain" id="PRO_1000144980" description="Protein translocase subunit SecA">
    <location>
        <begin position="1"/>
        <end position="906"/>
    </location>
</feature>
<feature type="region of interest" description="Disordered" evidence="2">
    <location>
        <begin position="868"/>
        <end position="887"/>
    </location>
</feature>
<feature type="binding site" evidence="1">
    <location>
        <position position="89"/>
    </location>
    <ligand>
        <name>ATP</name>
        <dbReference type="ChEBI" id="CHEBI:30616"/>
    </ligand>
</feature>
<feature type="binding site" evidence="1">
    <location>
        <begin position="107"/>
        <end position="111"/>
    </location>
    <ligand>
        <name>ATP</name>
        <dbReference type="ChEBI" id="CHEBI:30616"/>
    </ligand>
</feature>
<feature type="binding site" evidence="1">
    <location>
        <position position="502"/>
    </location>
    <ligand>
        <name>ATP</name>
        <dbReference type="ChEBI" id="CHEBI:30616"/>
    </ligand>
</feature>
<feature type="binding site" evidence="1">
    <location>
        <position position="890"/>
    </location>
    <ligand>
        <name>Zn(2+)</name>
        <dbReference type="ChEBI" id="CHEBI:29105"/>
    </ligand>
</feature>
<feature type="binding site" evidence="1">
    <location>
        <position position="892"/>
    </location>
    <ligand>
        <name>Zn(2+)</name>
        <dbReference type="ChEBI" id="CHEBI:29105"/>
    </ligand>
</feature>
<feature type="binding site" evidence="1">
    <location>
        <position position="901"/>
    </location>
    <ligand>
        <name>Zn(2+)</name>
        <dbReference type="ChEBI" id="CHEBI:29105"/>
    </ligand>
</feature>
<feature type="binding site" evidence="1">
    <location>
        <position position="902"/>
    </location>
    <ligand>
        <name>Zn(2+)</name>
        <dbReference type="ChEBI" id="CHEBI:29105"/>
    </ligand>
</feature>
<reference key="1">
    <citation type="journal article" date="2008" name="PLoS ONE">
        <title>Genome sequence of Brucella abortus vaccine strain S19 compared to virulent strains yields candidate virulence genes.</title>
        <authorList>
            <person name="Crasta O.R."/>
            <person name="Folkerts O."/>
            <person name="Fei Z."/>
            <person name="Mane S.P."/>
            <person name="Evans C."/>
            <person name="Martino-Catt S."/>
            <person name="Bricker B."/>
            <person name="Yu G."/>
            <person name="Du L."/>
            <person name="Sobral B.W."/>
        </authorList>
    </citation>
    <scope>NUCLEOTIDE SEQUENCE [LARGE SCALE GENOMIC DNA]</scope>
    <source>
        <strain>S19</strain>
    </source>
</reference>
<keyword id="KW-0067">ATP-binding</keyword>
<keyword id="KW-0997">Cell inner membrane</keyword>
<keyword id="KW-1003">Cell membrane</keyword>
<keyword id="KW-0963">Cytoplasm</keyword>
<keyword id="KW-0472">Membrane</keyword>
<keyword id="KW-0479">Metal-binding</keyword>
<keyword id="KW-0547">Nucleotide-binding</keyword>
<keyword id="KW-0653">Protein transport</keyword>
<keyword id="KW-1278">Translocase</keyword>
<keyword id="KW-0811">Translocation</keyword>
<keyword id="KW-0813">Transport</keyword>
<keyword id="KW-0862">Zinc</keyword>